<keyword id="KW-0687">Ribonucleoprotein</keyword>
<keyword id="KW-0689">Ribosomal protein</keyword>
<keyword id="KW-0694">RNA-binding</keyword>
<keyword id="KW-0699">rRNA-binding</keyword>
<reference key="1">
    <citation type="submission" date="2007-05" db="EMBL/GenBank/DDBJ databases">
        <title>Complete sequence of Pseudomonas putida F1.</title>
        <authorList>
            <consortium name="US DOE Joint Genome Institute"/>
            <person name="Copeland A."/>
            <person name="Lucas S."/>
            <person name="Lapidus A."/>
            <person name="Barry K."/>
            <person name="Detter J.C."/>
            <person name="Glavina del Rio T."/>
            <person name="Hammon N."/>
            <person name="Israni S."/>
            <person name="Dalin E."/>
            <person name="Tice H."/>
            <person name="Pitluck S."/>
            <person name="Chain P."/>
            <person name="Malfatti S."/>
            <person name="Shin M."/>
            <person name="Vergez L."/>
            <person name="Schmutz J."/>
            <person name="Larimer F."/>
            <person name="Land M."/>
            <person name="Hauser L."/>
            <person name="Kyrpides N."/>
            <person name="Lykidis A."/>
            <person name="Parales R."/>
            <person name="Richardson P."/>
        </authorList>
    </citation>
    <scope>NUCLEOTIDE SEQUENCE [LARGE SCALE GENOMIC DNA]</scope>
    <source>
        <strain>ATCC 700007 / DSM 6899 / JCM 31910 / BCRC 17059 / LMG 24140 / F1</strain>
    </source>
</reference>
<accession>A5VXR1</accession>
<feature type="chain" id="PRO_1000051791" description="Small ribosomal subunit protein uS8">
    <location>
        <begin position="1"/>
        <end position="130"/>
    </location>
</feature>
<protein>
    <recommendedName>
        <fullName evidence="1">Small ribosomal subunit protein uS8</fullName>
    </recommendedName>
    <alternativeName>
        <fullName evidence="2">30S ribosomal protein S8</fullName>
    </alternativeName>
</protein>
<organism>
    <name type="scientific">Pseudomonas putida (strain ATCC 700007 / DSM 6899 / JCM 31910 / BCRC 17059 / LMG 24140 / F1)</name>
    <dbReference type="NCBI Taxonomy" id="351746"/>
    <lineage>
        <taxon>Bacteria</taxon>
        <taxon>Pseudomonadati</taxon>
        <taxon>Pseudomonadota</taxon>
        <taxon>Gammaproteobacteria</taxon>
        <taxon>Pseudomonadales</taxon>
        <taxon>Pseudomonadaceae</taxon>
        <taxon>Pseudomonas</taxon>
    </lineage>
</organism>
<evidence type="ECO:0000255" key="1">
    <source>
        <dbReference type="HAMAP-Rule" id="MF_01302"/>
    </source>
</evidence>
<evidence type="ECO:0000305" key="2"/>
<name>RS8_PSEP1</name>
<gene>
    <name evidence="1" type="primary">rpsH</name>
    <name type="ordered locus">Pput_0501</name>
</gene>
<dbReference type="EMBL" id="CP000712">
    <property type="protein sequence ID" value="ABQ76671.1"/>
    <property type="molecule type" value="Genomic_DNA"/>
</dbReference>
<dbReference type="SMR" id="A5VXR1"/>
<dbReference type="KEGG" id="ppf:Pput_0501"/>
<dbReference type="eggNOG" id="COG0096">
    <property type="taxonomic scope" value="Bacteria"/>
</dbReference>
<dbReference type="HOGENOM" id="CLU_098428_0_0_6"/>
<dbReference type="GO" id="GO:1990904">
    <property type="term" value="C:ribonucleoprotein complex"/>
    <property type="evidence" value="ECO:0007669"/>
    <property type="project" value="UniProtKB-KW"/>
</dbReference>
<dbReference type="GO" id="GO:0005840">
    <property type="term" value="C:ribosome"/>
    <property type="evidence" value="ECO:0007669"/>
    <property type="project" value="UniProtKB-KW"/>
</dbReference>
<dbReference type="GO" id="GO:0019843">
    <property type="term" value="F:rRNA binding"/>
    <property type="evidence" value="ECO:0007669"/>
    <property type="project" value="UniProtKB-UniRule"/>
</dbReference>
<dbReference type="GO" id="GO:0003735">
    <property type="term" value="F:structural constituent of ribosome"/>
    <property type="evidence" value="ECO:0007669"/>
    <property type="project" value="InterPro"/>
</dbReference>
<dbReference type="GO" id="GO:0006412">
    <property type="term" value="P:translation"/>
    <property type="evidence" value="ECO:0007669"/>
    <property type="project" value="UniProtKB-UniRule"/>
</dbReference>
<dbReference type="FunFam" id="3.30.1370.30:FF:000003">
    <property type="entry name" value="30S ribosomal protein S8"/>
    <property type="match status" value="1"/>
</dbReference>
<dbReference type="FunFam" id="3.30.1490.10:FF:000001">
    <property type="entry name" value="30S ribosomal protein S8"/>
    <property type="match status" value="1"/>
</dbReference>
<dbReference type="Gene3D" id="3.30.1370.30">
    <property type="match status" value="1"/>
</dbReference>
<dbReference type="Gene3D" id="3.30.1490.10">
    <property type="match status" value="1"/>
</dbReference>
<dbReference type="HAMAP" id="MF_01302_B">
    <property type="entry name" value="Ribosomal_uS8_B"/>
    <property type="match status" value="1"/>
</dbReference>
<dbReference type="InterPro" id="IPR000630">
    <property type="entry name" value="Ribosomal_uS8"/>
</dbReference>
<dbReference type="InterPro" id="IPR047863">
    <property type="entry name" value="Ribosomal_uS8_CS"/>
</dbReference>
<dbReference type="InterPro" id="IPR035987">
    <property type="entry name" value="Ribosomal_uS8_sf"/>
</dbReference>
<dbReference type="NCBIfam" id="NF001109">
    <property type="entry name" value="PRK00136.1"/>
    <property type="match status" value="1"/>
</dbReference>
<dbReference type="PANTHER" id="PTHR11758">
    <property type="entry name" value="40S RIBOSOMAL PROTEIN S15A"/>
    <property type="match status" value="1"/>
</dbReference>
<dbReference type="Pfam" id="PF00410">
    <property type="entry name" value="Ribosomal_S8"/>
    <property type="match status" value="1"/>
</dbReference>
<dbReference type="SUPFAM" id="SSF56047">
    <property type="entry name" value="Ribosomal protein S8"/>
    <property type="match status" value="1"/>
</dbReference>
<dbReference type="PROSITE" id="PS00053">
    <property type="entry name" value="RIBOSOMAL_S8"/>
    <property type="match status" value="1"/>
</dbReference>
<comment type="function">
    <text evidence="1">One of the primary rRNA binding proteins, it binds directly to 16S rRNA central domain where it helps coordinate assembly of the platform of the 30S subunit.</text>
</comment>
<comment type="subunit">
    <text evidence="1">Part of the 30S ribosomal subunit. Contacts proteins S5 and S12.</text>
</comment>
<comment type="similarity">
    <text evidence="1">Belongs to the universal ribosomal protein uS8 family.</text>
</comment>
<proteinExistence type="inferred from homology"/>
<sequence>MSMQDPLADMLTRIRNAQMAEKSVVSMPSSTLKVAVAKVLKDEGYIAGYQVTGEAKPSLSIELKYFEGRPVIEELKRSSRPGLRQYKAVTDLPKVRGGLGVSIVSTNKGVMTDRAARAAGVGGEVLCTVF</sequence>